<keyword id="KW-0963">Cytoplasm</keyword>
<keyword id="KW-0227">DNA damage</keyword>
<keyword id="KW-0234">DNA repair</keyword>
<keyword id="KW-0378">Hydrolase</keyword>
<keyword id="KW-0346">Stress response</keyword>
<accession>Q2YSB0</accession>
<name>HCHA_STAAB</name>
<protein>
    <recommendedName>
        <fullName evidence="1">Protein/nucleic acid deglycase HchA</fullName>
        <ecNumber evidence="1">3.1.2.-</ecNumber>
        <ecNumber evidence="1">3.5.1.-</ecNumber>
        <ecNumber evidence="1">3.5.1.124</ecNumber>
    </recommendedName>
    <alternativeName>
        <fullName evidence="1">Maillard deglycase</fullName>
    </alternativeName>
</protein>
<feature type="chain" id="PRO_1000064285" description="Protein/nucleic acid deglycase HchA">
    <location>
        <begin position="1"/>
        <end position="292"/>
    </location>
</feature>
<feature type="region of interest" description="Disordered" evidence="2">
    <location>
        <begin position="1"/>
        <end position="23"/>
    </location>
</feature>
<feature type="compositionally biased region" description="Polar residues" evidence="2">
    <location>
        <begin position="1"/>
        <end position="12"/>
    </location>
</feature>
<feature type="active site" description="Nucleophile" evidence="1">
    <location>
        <position position="190"/>
    </location>
</feature>
<proteinExistence type="inferred from homology"/>
<sequence length="292" mass="32191">MSQDVNELSKQPTPDKAEDNAFFPSPYSLSQYTAPKTDFDGVEHKGAYKDGKWKVLMIAAEERYVLLENGKMFSTGNHPVEMLLPLHHLMEAGFDVDVATLSGYPAKLELWAMPTEDEAVITTYNKLKEKLKQPKKLADVIKNELGPDSDYLSVFIPGGHAAVVGISESEDVQKTLDWALENDRFIVTLCHGPAALLSAGLNREKSPLEGYSVCVFPDSLDEGANIEIGYLPGRLKWLVAELLTKQGLKVVNDDMTGRTLKDRKLLTGDSPLASNELGKLAVNEMLNAIQNK</sequence>
<reference key="1">
    <citation type="journal article" date="2007" name="PLoS ONE">
        <title>Molecular correlates of host specialization in Staphylococcus aureus.</title>
        <authorList>
            <person name="Herron-Olson L."/>
            <person name="Fitzgerald J.R."/>
            <person name="Musser J.M."/>
            <person name="Kapur V."/>
        </authorList>
    </citation>
    <scope>NUCLEOTIDE SEQUENCE [LARGE SCALE GENOMIC DNA]</scope>
    <source>
        <strain>bovine RF122 / ET3-1</strain>
    </source>
</reference>
<evidence type="ECO:0000255" key="1">
    <source>
        <dbReference type="HAMAP-Rule" id="MF_01046"/>
    </source>
</evidence>
<evidence type="ECO:0000256" key="2">
    <source>
        <dbReference type="SAM" id="MobiDB-lite"/>
    </source>
</evidence>
<dbReference type="EC" id="3.1.2.-" evidence="1"/>
<dbReference type="EC" id="3.5.1.-" evidence="1"/>
<dbReference type="EC" id="3.5.1.124" evidence="1"/>
<dbReference type="EMBL" id="AJ938182">
    <property type="protein sequence ID" value="CAI80190.1"/>
    <property type="molecule type" value="Genomic_DNA"/>
</dbReference>
<dbReference type="RefSeq" id="WP_000076401.1">
    <property type="nucleotide sequence ID" value="NC_007622.1"/>
</dbReference>
<dbReference type="SMR" id="Q2YSB0"/>
<dbReference type="KEGG" id="sab:SAB0502"/>
<dbReference type="HOGENOM" id="CLU_066933_0_0_9"/>
<dbReference type="GO" id="GO:0005737">
    <property type="term" value="C:cytoplasm"/>
    <property type="evidence" value="ECO:0007669"/>
    <property type="project" value="UniProtKB-SubCell"/>
</dbReference>
<dbReference type="GO" id="GO:0019172">
    <property type="term" value="F:glyoxalase III activity"/>
    <property type="evidence" value="ECO:0007669"/>
    <property type="project" value="TreeGrafter"/>
</dbReference>
<dbReference type="GO" id="GO:0036524">
    <property type="term" value="F:protein deglycase activity"/>
    <property type="evidence" value="ECO:0007669"/>
    <property type="project" value="UniProtKB-UniRule"/>
</dbReference>
<dbReference type="GO" id="GO:0016790">
    <property type="term" value="F:thiolester hydrolase activity"/>
    <property type="evidence" value="ECO:0007669"/>
    <property type="project" value="UniProtKB-UniRule"/>
</dbReference>
<dbReference type="GO" id="GO:0006281">
    <property type="term" value="P:DNA repair"/>
    <property type="evidence" value="ECO:0007669"/>
    <property type="project" value="UniProtKB-UniRule"/>
</dbReference>
<dbReference type="GO" id="GO:0019243">
    <property type="term" value="P:methylglyoxal catabolic process to D-lactate via S-lactoyl-glutathione"/>
    <property type="evidence" value="ECO:0007669"/>
    <property type="project" value="TreeGrafter"/>
</dbReference>
<dbReference type="GO" id="GO:0030091">
    <property type="term" value="P:protein repair"/>
    <property type="evidence" value="ECO:0007669"/>
    <property type="project" value="UniProtKB-UniRule"/>
</dbReference>
<dbReference type="CDD" id="cd03148">
    <property type="entry name" value="GATase1_EcHsp31_like"/>
    <property type="match status" value="1"/>
</dbReference>
<dbReference type="Gene3D" id="3.40.50.880">
    <property type="match status" value="1"/>
</dbReference>
<dbReference type="HAMAP" id="MF_01046">
    <property type="entry name" value="Deglycase_HchA"/>
    <property type="match status" value="1"/>
</dbReference>
<dbReference type="InterPro" id="IPR029062">
    <property type="entry name" value="Class_I_gatase-like"/>
</dbReference>
<dbReference type="InterPro" id="IPR002818">
    <property type="entry name" value="DJ-1/PfpI"/>
</dbReference>
<dbReference type="InterPro" id="IPR017283">
    <property type="entry name" value="HchA"/>
</dbReference>
<dbReference type="InterPro" id="IPR050325">
    <property type="entry name" value="Prot/Nucl_acid_deglycase"/>
</dbReference>
<dbReference type="NCBIfam" id="NF003168">
    <property type="entry name" value="PRK04155.1"/>
    <property type="match status" value="1"/>
</dbReference>
<dbReference type="PANTHER" id="PTHR48094">
    <property type="entry name" value="PROTEIN/NUCLEIC ACID DEGLYCASE DJ-1-RELATED"/>
    <property type="match status" value="1"/>
</dbReference>
<dbReference type="PANTHER" id="PTHR48094:SF20">
    <property type="entry name" value="PROTEIN_NUCLEIC ACID DEGLYCASE 1"/>
    <property type="match status" value="1"/>
</dbReference>
<dbReference type="Pfam" id="PF01965">
    <property type="entry name" value="DJ-1_PfpI"/>
    <property type="match status" value="1"/>
</dbReference>
<dbReference type="PIRSF" id="PIRSF037798">
    <property type="entry name" value="Chaperone_HchA"/>
    <property type="match status" value="1"/>
</dbReference>
<dbReference type="SUPFAM" id="SSF52317">
    <property type="entry name" value="Class I glutamine amidotransferase-like"/>
    <property type="match status" value="1"/>
</dbReference>
<gene>
    <name evidence="1" type="primary">hchA</name>
    <name type="ordered locus">SAB0502</name>
</gene>
<organism>
    <name type="scientific">Staphylococcus aureus (strain bovine RF122 / ET3-1)</name>
    <dbReference type="NCBI Taxonomy" id="273036"/>
    <lineage>
        <taxon>Bacteria</taxon>
        <taxon>Bacillati</taxon>
        <taxon>Bacillota</taxon>
        <taxon>Bacilli</taxon>
        <taxon>Bacillales</taxon>
        <taxon>Staphylococcaceae</taxon>
        <taxon>Staphylococcus</taxon>
    </lineage>
</organism>
<comment type="function">
    <text evidence="1">Protein and nucleotide deglycase that catalyzes the deglycation of the Maillard adducts formed between amino groups of proteins or nucleotides and reactive carbonyl groups of glyoxals. Thus, functions as a protein deglycase that repairs methylglyoxal- and glyoxal-glycated proteins, and releases repaired proteins and lactate or glycolate, respectively. Deglycates cysteine, arginine and lysine residues in proteins, and thus reactivates these proteins by reversing glycation by glyoxals. Acts on early glycation intermediates (hemithioacetals and aminocarbinols), preventing the formation of Schiff bases and advanced glycation endproducts (AGE). Also functions as a nucleotide deglycase able to repair glycated guanine in the free nucleotide pool (GTP, GDP, GMP, dGTP) and in DNA and RNA. Is thus involved in a major nucleotide repair system named guanine glycation repair (GG repair), dedicated to reversing methylglyoxal and glyoxal damage via nucleotide sanitization and direct nucleic acid repair. Plays an important role in protecting cells from carbonyl stress.</text>
</comment>
<comment type="catalytic activity">
    <reaction evidence="1">
        <text>N(omega)-(1-hydroxy-2-oxopropyl)-L-arginyl-[protein] + H2O = lactate + L-arginyl-[protein] + H(+)</text>
        <dbReference type="Rhea" id="RHEA:49548"/>
        <dbReference type="Rhea" id="RHEA-COMP:10532"/>
        <dbReference type="Rhea" id="RHEA-COMP:12428"/>
        <dbReference type="ChEBI" id="CHEBI:15377"/>
        <dbReference type="ChEBI" id="CHEBI:15378"/>
        <dbReference type="ChEBI" id="CHEBI:24996"/>
        <dbReference type="ChEBI" id="CHEBI:29965"/>
        <dbReference type="ChEBI" id="CHEBI:131708"/>
        <dbReference type="EC" id="3.5.1.124"/>
    </reaction>
</comment>
<comment type="catalytic activity">
    <reaction evidence="1">
        <text>N(6)-(1-hydroxy-2-oxopropyl)-L-lysyl-[protein] + H2O = lactate + L-lysyl-[protein] + H(+)</text>
        <dbReference type="Rhea" id="RHEA:49552"/>
        <dbReference type="Rhea" id="RHEA-COMP:9752"/>
        <dbReference type="Rhea" id="RHEA-COMP:12429"/>
        <dbReference type="ChEBI" id="CHEBI:15377"/>
        <dbReference type="ChEBI" id="CHEBI:15378"/>
        <dbReference type="ChEBI" id="CHEBI:24996"/>
        <dbReference type="ChEBI" id="CHEBI:29969"/>
        <dbReference type="ChEBI" id="CHEBI:131709"/>
        <dbReference type="EC" id="3.5.1.124"/>
    </reaction>
</comment>
<comment type="catalytic activity">
    <reaction evidence="1">
        <text>S-(1-hydroxy-2-oxopropyl)-L-cysteinyl-[protein] + H2O = lactate + L-cysteinyl-[protein] + H(+)</text>
        <dbReference type="Rhea" id="RHEA:49556"/>
        <dbReference type="Rhea" id="RHEA-COMP:10131"/>
        <dbReference type="Rhea" id="RHEA-COMP:12430"/>
        <dbReference type="ChEBI" id="CHEBI:15377"/>
        <dbReference type="ChEBI" id="CHEBI:15378"/>
        <dbReference type="ChEBI" id="CHEBI:24996"/>
        <dbReference type="ChEBI" id="CHEBI:29950"/>
        <dbReference type="ChEBI" id="CHEBI:131710"/>
        <dbReference type="EC" id="3.5.1.124"/>
    </reaction>
</comment>
<comment type="catalytic activity">
    <reaction evidence="1">
        <text>N(omega)-(1-hydroxy-2-oxoethyl)-L-arginyl-[protein] + H2O = L-arginyl-[protein] + glycolate + H(+)</text>
        <dbReference type="Rhea" id="RHEA:57188"/>
        <dbReference type="Rhea" id="RHEA-COMP:10532"/>
        <dbReference type="Rhea" id="RHEA-COMP:14844"/>
        <dbReference type="ChEBI" id="CHEBI:15377"/>
        <dbReference type="ChEBI" id="CHEBI:15378"/>
        <dbReference type="ChEBI" id="CHEBI:29805"/>
        <dbReference type="ChEBI" id="CHEBI:29965"/>
        <dbReference type="ChEBI" id="CHEBI:141553"/>
        <dbReference type="EC" id="3.5.1.124"/>
    </reaction>
</comment>
<comment type="catalytic activity">
    <reaction evidence="1">
        <text>N(6)-(1-hydroxy-2-oxoethyl)-L-lysyl-[protein] + H2O = glycolate + L-lysyl-[protein] + H(+)</text>
        <dbReference type="Rhea" id="RHEA:57192"/>
        <dbReference type="Rhea" id="RHEA-COMP:9752"/>
        <dbReference type="Rhea" id="RHEA-COMP:14845"/>
        <dbReference type="ChEBI" id="CHEBI:15377"/>
        <dbReference type="ChEBI" id="CHEBI:15378"/>
        <dbReference type="ChEBI" id="CHEBI:29805"/>
        <dbReference type="ChEBI" id="CHEBI:29969"/>
        <dbReference type="ChEBI" id="CHEBI:141554"/>
        <dbReference type="EC" id="3.5.1.124"/>
    </reaction>
</comment>
<comment type="catalytic activity">
    <reaction evidence="1">
        <text>S-(1-hydroxy-2-oxoethyl)-L-cysteinyl-[protein] + H2O = glycolate + L-cysteinyl-[protein] + H(+)</text>
        <dbReference type="Rhea" id="RHEA:57196"/>
        <dbReference type="Rhea" id="RHEA-COMP:10131"/>
        <dbReference type="Rhea" id="RHEA-COMP:14846"/>
        <dbReference type="ChEBI" id="CHEBI:15377"/>
        <dbReference type="ChEBI" id="CHEBI:15378"/>
        <dbReference type="ChEBI" id="CHEBI:29805"/>
        <dbReference type="ChEBI" id="CHEBI:29950"/>
        <dbReference type="ChEBI" id="CHEBI:141555"/>
        <dbReference type="EC" id="3.5.1.124"/>
    </reaction>
</comment>
<comment type="catalytic activity">
    <reaction evidence="1">
        <text>N(2)-(1-hydroxy-2-oxopropyl)-dGTP + H2O = lactate + dGTP + H(+)</text>
        <dbReference type="Rhea" id="RHEA:57244"/>
        <dbReference type="ChEBI" id="CHEBI:15377"/>
        <dbReference type="ChEBI" id="CHEBI:15378"/>
        <dbReference type="ChEBI" id="CHEBI:24996"/>
        <dbReference type="ChEBI" id="CHEBI:61429"/>
        <dbReference type="ChEBI" id="CHEBI:141569"/>
    </reaction>
</comment>
<comment type="catalytic activity">
    <reaction evidence="1">
        <text>N(2)-(1-hydroxy-2-oxopropyl)-GTP + H2O = lactate + GTP + H(+)</text>
        <dbReference type="Rhea" id="RHEA:57256"/>
        <dbReference type="ChEBI" id="CHEBI:15377"/>
        <dbReference type="ChEBI" id="CHEBI:15378"/>
        <dbReference type="ChEBI" id="CHEBI:24996"/>
        <dbReference type="ChEBI" id="CHEBI:37565"/>
        <dbReference type="ChEBI" id="CHEBI:141570"/>
    </reaction>
</comment>
<comment type="catalytic activity">
    <reaction evidence="1">
        <text>N(2)-(1-hydroxy-2-oxopropyl)-GDP + H2O = lactate + GDP + H(+)</text>
        <dbReference type="Rhea" id="RHEA:57260"/>
        <dbReference type="ChEBI" id="CHEBI:15377"/>
        <dbReference type="ChEBI" id="CHEBI:15378"/>
        <dbReference type="ChEBI" id="CHEBI:24996"/>
        <dbReference type="ChEBI" id="CHEBI:58189"/>
        <dbReference type="ChEBI" id="CHEBI:141573"/>
    </reaction>
</comment>
<comment type="catalytic activity">
    <reaction evidence="1">
        <text>N(2)-(1-hydroxy-2-oxopropyl)-GMP + H2O = lactate + GMP + H(+)</text>
        <dbReference type="Rhea" id="RHEA:57268"/>
        <dbReference type="ChEBI" id="CHEBI:15377"/>
        <dbReference type="ChEBI" id="CHEBI:15378"/>
        <dbReference type="ChEBI" id="CHEBI:24996"/>
        <dbReference type="ChEBI" id="CHEBI:58115"/>
        <dbReference type="ChEBI" id="CHEBI:141575"/>
    </reaction>
</comment>
<comment type="catalytic activity">
    <reaction evidence="1">
        <text>N(2)-(1-hydroxy-2-oxoethyl)-dGTP + H2O = dGTP + glycolate + H(+)</text>
        <dbReference type="Rhea" id="RHEA:57248"/>
        <dbReference type="ChEBI" id="CHEBI:15377"/>
        <dbReference type="ChEBI" id="CHEBI:15378"/>
        <dbReference type="ChEBI" id="CHEBI:29805"/>
        <dbReference type="ChEBI" id="CHEBI:61429"/>
        <dbReference type="ChEBI" id="CHEBI:141572"/>
    </reaction>
</comment>
<comment type="catalytic activity">
    <reaction evidence="1">
        <text>N(2)-(1-hydroxy-2-oxoethyl)-GTP + H2O = glycolate + GTP + H(+)</text>
        <dbReference type="Rhea" id="RHEA:57252"/>
        <dbReference type="ChEBI" id="CHEBI:15377"/>
        <dbReference type="ChEBI" id="CHEBI:15378"/>
        <dbReference type="ChEBI" id="CHEBI:29805"/>
        <dbReference type="ChEBI" id="CHEBI:37565"/>
        <dbReference type="ChEBI" id="CHEBI:141571"/>
    </reaction>
</comment>
<comment type="catalytic activity">
    <reaction evidence="1">
        <text>N(2)-(1-hydroxy-2-oxoethyl)-GDP + H2O = glycolate + GDP + H(+)</text>
        <dbReference type="Rhea" id="RHEA:57264"/>
        <dbReference type="ChEBI" id="CHEBI:15377"/>
        <dbReference type="ChEBI" id="CHEBI:15378"/>
        <dbReference type="ChEBI" id="CHEBI:29805"/>
        <dbReference type="ChEBI" id="CHEBI:58189"/>
        <dbReference type="ChEBI" id="CHEBI:141574"/>
    </reaction>
</comment>
<comment type="catalytic activity">
    <reaction evidence="1">
        <text>N(2)-(1-hydroxy-2-oxoethyl)-GMP + H2O = glycolate + GMP + H(+)</text>
        <dbReference type="Rhea" id="RHEA:57304"/>
        <dbReference type="ChEBI" id="CHEBI:15377"/>
        <dbReference type="ChEBI" id="CHEBI:15378"/>
        <dbReference type="ChEBI" id="CHEBI:29805"/>
        <dbReference type="ChEBI" id="CHEBI:58115"/>
        <dbReference type="ChEBI" id="CHEBI:141576"/>
    </reaction>
</comment>
<comment type="catalytic activity">
    <reaction evidence="1">
        <text>an N(2)-(1-hydroxy-2-oxopropyl)-guanosine in RNA + H2O = a guanosine in RNA + lactate + H(+)</text>
        <dbReference type="Rhea" id="RHEA:57288"/>
        <dbReference type="Rhea" id="RHEA-COMP:14855"/>
        <dbReference type="Rhea" id="RHEA-COMP:14858"/>
        <dbReference type="ChEBI" id="CHEBI:15377"/>
        <dbReference type="ChEBI" id="CHEBI:15378"/>
        <dbReference type="ChEBI" id="CHEBI:24996"/>
        <dbReference type="ChEBI" id="CHEBI:74269"/>
        <dbReference type="ChEBI" id="CHEBI:141580"/>
    </reaction>
</comment>
<comment type="catalytic activity">
    <reaction evidence="1">
        <text>an N(2)-(1-hydroxy-2-oxopropyl)-2'-deoxyguanosine in DNA + H2O = a 2'-deoxyguanosine in DNA + lactate + H(+)</text>
        <dbReference type="Rhea" id="RHEA:57300"/>
        <dbReference type="Rhea" id="RHEA-COMP:11367"/>
        <dbReference type="Rhea" id="RHEA-COMP:14856"/>
        <dbReference type="ChEBI" id="CHEBI:15377"/>
        <dbReference type="ChEBI" id="CHEBI:15378"/>
        <dbReference type="ChEBI" id="CHEBI:24996"/>
        <dbReference type="ChEBI" id="CHEBI:85445"/>
        <dbReference type="ChEBI" id="CHEBI:141578"/>
    </reaction>
</comment>
<comment type="catalytic activity">
    <reaction evidence="1">
        <text>an N(2)-(1-hydroxy-2-oxoethyl)-guanosine in RNA + H2O = a guanosine in RNA + glycolate + H(+)</text>
        <dbReference type="Rhea" id="RHEA:57292"/>
        <dbReference type="Rhea" id="RHEA-COMP:14855"/>
        <dbReference type="Rhea" id="RHEA-COMP:14859"/>
        <dbReference type="ChEBI" id="CHEBI:15377"/>
        <dbReference type="ChEBI" id="CHEBI:15378"/>
        <dbReference type="ChEBI" id="CHEBI:29805"/>
        <dbReference type="ChEBI" id="CHEBI:74269"/>
        <dbReference type="ChEBI" id="CHEBI:141581"/>
    </reaction>
</comment>
<comment type="catalytic activity">
    <reaction evidence="1">
        <text>an N(2)-(1-hydroxy-2-oxoethyl)-2'-deoxyguanosine in DNA + H2O = a 2'-deoxyguanosine in DNA + glycolate + H(+)</text>
        <dbReference type="Rhea" id="RHEA:57296"/>
        <dbReference type="Rhea" id="RHEA-COMP:11367"/>
        <dbReference type="Rhea" id="RHEA-COMP:14857"/>
        <dbReference type="ChEBI" id="CHEBI:15377"/>
        <dbReference type="ChEBI" id="CHEBI:15378"/>
        <dbReference type="ChEBI" id="CHEBI:29805"/>
        <dbReference type="ChEBI" id="CHEBI:85445"/>
        <dbReference type="ChEBI" id="CHEBI:141579"/>
    </reaction>
</comment>
<comment type="subcellular location">
    <subcellularLocation>
        <location evidence="1">Cytoplasm</location>
    </subcellularLocation>
</comment>
<comment type="similarity">
    <text evidence="1">Belongs to the peptidase C56 family. HchA subfamily.</text>
</comment>